<reference key="1">
    <citation type="journal article" date="1994" name="J. Bacteriol.">
        <title>Genetics of the serine cycle in Methylobacterium extorquens AM1: identification of sgaA and mtdA and sequences of sgaA, hprA, and mtdA.</title>
        <authorList>
            <person name="Chistoserdova L.V."/>
            <person name="Lidstrom M.E."/>
        </authorList>
    </citation>
    <scope>NUCLEOTIDE SEQUENCE [GENOMIC DNA]</scope>
</reference>
<reference key="2">
    <citation type="journal article" date="2009" name="PLoS ONE">
        <title>Methylobacterium genome sequences: a reference blueprint to investigate microbial metabolism of C1 compounds from natural and industrial sources.</title>
        <authorList>
            <person name="Vuilleumier S."/>
            <person name="Chistoserdova L."/>
            <person name="Lee M.-C."/>
            <person name="Bringel F."/>
            <person name="Lajus A."/>
            <person name="Zhou Y."/>
            <person name="Gourion B."/>
            <person name="Barbe V."/>
            <person name="Chang J."/>
            <person name="Cruveiller S."/>
            <person name="Dossat C."/>
            <person name="Gillett W."/>
            <person name="Gruffaz C."/>
            <person name="Haugen E."/>
            <person name="Hourcade E."/>
            <person name="Levy R."/>
            <person name="Mangenot S."/>
            <person name="Muller E."/>
            <person name="Nadalig T."/>
            <person name="Pagni M."/>
            <person name="Penny C."/>
            <person name="Peyraud R."/>
            <person name="Robinson D.G."/>
            <person name="Roche D."/>
            <person name="Rouy Z."/>
            <person name="Saenampechek C."/>
            <person name="Salvignol G."/>
            <person name="Vallenet D."/>
            <person name="Wu Z."/>
            <person name="Marx C.J."/>
            <person name="Vorholt J.A."/>
            <person name="Olson M.V."/>
            <person name="Kaul R."/>
            <person name="Weissenbach J."/>
            <person name="Medigue C."/>
            <person name="Lidstrom M.E."/>
        </authorList>
    </citation>
    <scope>NUCLEOTIDE SEQUENCE [LARGE SCALE GENOMIC DNA]</scope>
    <source>
        <strain>ATCC 14718 / DSM 1338 / JCM 2805 / NCIMB 9133 / AM1</strain>
    </source>
</reference>
<reference key="3">
    <citation type="journal article" date="1992" name="J. Bacteriol.">
        <title>Cloning, mutagenesis, and physiological effect of a hydroxypyruvate reductase gene from Methylobacterium extorquens AM1.</title>
        <authorList>
            <person name="Chistoserdova L.V."/>
            <person name="Lidstrom M.E."/>
        </authorList>
    </citation>
    <scope>NUCLEOTIDE SEQUENCE [GENOMIC DNA] OF 1-20</scope>
</reference>
<reference key="4">
    <citation type="journal article" date="1991" name="J. Bacteriol.">
        <title>Purification and characterization of hydroxypyruvate reductase from the facultative methylotroph Methylobacterium extorquens AM1.</title>
        <authorList>
            <person name="Chistoserdova L.V."/>
            <person name="Lidstrom M.E."/>
        </authorList>
    </citation>
    <scope>PROTEIN SEQUENCE OF 3-24</scope>
    <scope>CHARACTERIZATION</scope>
</reference>
<dbReference type="EC" id="1.1.1.29"/>
<dbReference type="EMBL" id="L27235">
    <property type="status" value="NOT_ANNOTATED_CDS"/>
    <property type="molecule type" value="Genomic_DNA"/>
</dbReference>
<dbReference type="EMBL" id="CP001510">
    <property type="protein sequence ID" value="ACS39571.1"/>
    <property type="molecule type" value="Genomic_DNA"/>
</dbReference>
<dbReference type="EMBL" id="M81443">
    <property type="protein sequence ID" value="AAA25378.1"/>
    <property type="molecule type" value="Genomic_DNA"/>
</dbReference>
<dbReference type="PIR" id="A44921">
    <property type="entry name" value="A44921"/>
</dbReference>
<dbReference type="RefSeq" id="WP_003597638.1">
    <property type="nucleotide sequence ID" value="NC_012808.1"/>
</dbReference>
<dbReference type="SMR" id="Q59516"/>
<dbReference type="STRING" id="272630.MexAM1_META1p1727"/>
<dbReference type="KEGG" id="mea:Mex_1p1727"/>
<dbReference type="eggNOG" id="COG1052">
    <property type="taxonomic scope" value="Bacteria"/>
</dbReference>
<dbReference type="HOGENOM" id="CLU_019796_1_3_5"/>
<dbReference type="OrthoDB" id="9793626at2"/>
<dbReference type="BioCyc" id="MetaCyc:MONOMER-3821"/>
<dbReference type="UniPathway" id="UPA00927"/>
<dbReference type="Proteomes" id="UP000009081">
    <property type="component" value="Chromosome"/>
</dbReference>
<dbReference type="GO" id="GO:0005737">
    <property type="term" value="C:cytoplasm"/>
    <property type="evidence" value="ECO:0007669"/>
    <property type="project" value="UniProtKB-SubCell"/>
</dbReference>
<dbReference type="GO" id="GO:0008465">
    <property type="term" value="F:hydroxypyruvate reductase (NADH) activity"/>
    <property type="evidence" value="ECO:0007669"/>
    <property type="project" value="UniProtKB-EC"/>
</dbReference>
<dbReference type="GO" id="GO:0051287">
    <property type="term" value="F:NAD binding"/>
    <property type="evidence" value="ECO:0007669"/>
    <property type="project" value="InterPro"/>
</dbReference>
<dbReference type="CDD" id="cd12162">
    <property type="entry name" value="2-Hacid_dh_4"/>
    <property type="match status" value="1"/>
</dbReference>
<dbReference type="FunFam" id="3.40.50.720:FF:000203">
    <property type="entry name" value="D-3-phosphoglycerate dehydrogenase (SerA)"/>
    <property type="match status" value="1"/>
</dbReference>
<dbReference type="Gene3D" id="3.40.50.720">
    <property type="entry name" value="NAD(P)-binding Rossmann-like Domain"/>
    <property type="match status" value="2"/>
</dbReference>
<dbReference type="InterPro" id="IPR050418">
    <property type="entry name" value="D-iso_2-hydroxyacid_DH_PdxB"/>
</dbReference>
<dbReference type="InterPro" id="IPR006139">
    <property type="entry name" value="D-isomer_2_OHA_DH_cat_dom"/>
</dbReference>
<dbReference type="InterPro" id="IPR029753">
    <property type="entry name" value="D-isomer_DH_CS"/>
</dbReference>
<dbReference type="InterPro" id="IPR029752">
    <property type="entry name" value="D-isomer_DH_CS1"/>
</dbReference>
<dbReference type="InterPro" id="IPR006140">
    <property type="entry name" value="D-isomer_DH_NAD-bd"/>
</dbReference>
<dbReference type="InterPro" id="IPR036291">
    <property type="entry name" value="NAD(P)-bd_dom_sf"/>
</dbReference>
<dbReference type="PANTHER" id="PTHR43761:SF1">
    <property type="entry name" value="D-ISOMER SPECIFIC 2-HYDROXYACID DEHYDROGENASE CATALYTIC DOMAIN-CONTAINING PROTEIN-RELATED"/>
    <property type="match status" value="1"/>
</dbReference>
<dbReference type="PANTHER" id="PTHR43761">
    <property type="entry name" value="D-ISOMER SPECIFIC 2-HYDROXYACID DEHYDROGENASE FAMILY PROTEIN (AFU_ORTHOLOGUE AFUA_1G13630)"/>
    <property type="match status" value="1"/>
</dbReference>
<dbReference type="Pfam" id="PF00389">
    <property type="entry name" value="2-Hacid_dh"/>
    <property type="match status" value="1"/>
</dbReference>
<dbReference type="Pfam" id="PF02826">
    <property type="entry name" value="2-Hacid_dh_C"/>
    <property type="match status" value="1"/>
</dbReference>
<dbReference type="SUPFAM" id="SSF52283">
    <property type="entry name" value="Formate/glycerate dehydrogenase catalytic domain-like"/>
    <property type="match status" value="1"/>
</dbReference>
<dbReference type="SUPFAM" id="SSF51735">
    <property type="entry name" value="NAD(P)-binding Rossmann-fold domains"/>
    <property type="match status" value="1"/>
</dbReference>
<dbReference type="PROSITE" id="PS00065">
    <property type="entry name" value="D_2_HYDROXYACID_DH_1"/>
    <property type="match status" value="1"/>
</dbReference>
<dbReference type="PROSITE" id="PS00670">
    <property type="entry name" value="D_2_HYDROXYACID_DH_2"/>
    <property type="match status" value="1"/>
</dbReference>
<dbReference type="PROSITE" id="PS00671">
    <property type="entry name" value="D_2_HYDROXYACID_DH_3"/>
    <property type="match status" value="1"/>
</dbReference>
<name>DHGY_METEA</name>
<accession>Q59516</accession>
<accession>C5B107</accession>
<organism>
    <name type="scientific">Methylorubrum extorquens (strain ATCC 14718 / DSM 1338 / JCM 2805 / NCIMB 9133 / AM1)</name>
    <name type="common">Methylobacterium extorquens</name>
    <dbReference type="NCBI Taxonomy" id="272630"/>
    <lineage>
        <taxon>Bacteria</taxon>
        <taxon>Pseudomonadati</taxon>
        <taxon>Pseudomonadota</taxon>
        <taxon>Alphaproteobacteria</taxon>
        <taxon>Hyphomicrobiales</taxon>
        <taxon>Methylobacteriaceae</taxon>
        <taxon>Methylorubrum</taxon>
    </lineage>
</organism>
<gene>
    <name type="primary">hprA</name>
    <name type="ordered locus">MexAM1_META1p1727</name>
</gene>
<keyword id="KW-0963">Cytoplasm</keyword>
<keyword id="KW-0903">Direct protein sequencing</keyword>
<keyword id="KW-0520">NAD</keyword>
<keyword id="KW-0521">NADP</keyword>
<keyword id="KW-0560">Oxidoreductase</keyword>
<keyword id="KW-1185">Reference proteome</keyword>
<comment type="function">
    <text>Plays a central role in assimilation of carbon. It converts hydroxypyruvate to glycerate as a key step in the serine cycle, and may also play an important role in C2 reactions, by interconverting glyoxylate and glycolate.</text>
</comment>
<comment type="catalytic activity">
    <reaction>
        <text>(R)-glycerate + NAD(+) = 3-hydroxypyruvate + NADH + H(+)</text>
        <dbReference type="Rhea" id="RHEA:17905"/>
        <dbReference type="ChEBI" id="CHEBI:15378"/>
        <dbReference type="ChEBI" id="CHEBI:16659"/>
        <dbReference type="ChEBI" id="CHEBI:17180"/>
        <dbReference type="ChEBI" id="CHEBI:57540"/>
        <dbReference type="ChEBI" id="CHEBI:57945"/>
        <dbReference type="EC" id="1.1.1.29"/>
    </reaction>
</comment>
<comment type="pathway">
    <text>One-carbon metabolism; formaldehyde assimilation via serine pathway.</text>
</comment>
<comment type="subunit">
    <text>Homodimer.</text>
</comment>
<comment type="subcellular location">
    <subcellularLocation>
        <location>Cytoplasm</location>
    </subcellularLocation>
</comment>
<comment type="miscellaneous">
    <text>Uses both NAD and NADP.</text>
</comment>
<comment type="similarity">
    <text evidence="2">Belongs to the D-isomer specific 2-hydroxyacid dehydrogenase family.</text>
</comment>
<proteinExistence type="evidence at protein level"/>
<sequence>MTKKVVFLDRESLDATVREFNFPHEYKEYESTWTPEEIVERLQGAEIAMINKVPMRADTLKQLPDLKLIAVAATGTDVVDKAAAKAQGITVVNIRNYAFNTVPEHVVGLMFALRRAIVPYANSVRRGDWNKSKQFCYFDYPIYDIAGSTLGIIGYGALGKSIAKRAEALGMKVLAFDVFPQDGLVDLETILTQSDVITLHVPLTPDTKNMIGAEQLKKMKRSAILINTARGGLVDEAALLQALKDGTIGGAGFDVVAQEPPKDGNILCDADLPNLIVTPHVAWASKEAMQILADQLVDNVEAFVAGKPQNVVEA</sequence>
<feature type="initiator methionine" description="Removed">
    <location>
        <position position="1"/>
    </location>
</feature>
<feature type="chain" id="PRO_0000075943" description="Glycerate dehydrogenase">
    <location>
        <begin position="2"/>
        <end position="314"/>
    </location>
</feature>
<feature type="active site" evidence="1">
    <location>
        <position position="230"/>
    </location>
</feature>
<feature type="active site" evidence="1">
    <location>
        <position position="259"/>
    </location>
</feature>
<feature type="active site" description="Proton donor" evidence="1">
    <location>
        <position position="280"/>
    </location>
</feature>
<feature type="binding site" evidence="1">
    <location>
        <position position="74"/>
    </location>
    <ligand>
        <name>NAD(+)</name>
        <dbReference type="ChEBI" id="CHEBI:57540"/>
    </ligand>
</feature>
<feature type="binding site" evidence="1">
    <location>
        <begin position="157"/>
        <end position="158"/>
    </location>
    <ligand>
        <name>NAD(+)</name>
        <dbReference type="ChEBI" id="CHEBI:57540"/>
    </ligand>
</feature>
<feature type="binding site" evidence="1">
    <location>
        <begin position="228"/>
        <end position="230"/>
    </location>
    <ligand>
        <name>NAD(+)</name>
        <dbReference type="ChEBI" id="CHEBI:57540"/>
    </ligand>
</feature>
<feature type="binding site" evidence="1">
    <location>
        <position position="254"/>
    </location>
    <ligand>
        <name>NAD(+)</name>
        <dbReference type="ChEBI" id="CHEBI:57540"/>
    </ligand>
</feature>
<feature type="binding site" evidence="1">
    <location>
        <begin position="280"/>
        <end position="283"/>
    </location>
    <ligand>
        <name>NAD(+)</name>
        <dbReference type="ChEBI" id="CHEBI:57540"/>
    </ligand>
</feature>
<feature type="sequence conflict" description="In Ref. 4; AA sequence." evidence="2" ref="4">
    <original>F</original>
    <variation>N</variation>
    <location>
        <position position="22"/>
    </location>
</feature>
<protein>
    <recommendedName>
        <fullName>Glycerate dehydrogenase</fullName>
        <shortName>GDH</shortName>
        <ecNumber>1.1.1.29</ecNumber>
    </recommendedName>
    <alternativeName>
        <fullName>Glyoxylate reductase</fullName>
    </alternativeName>
    <alternativeName>
        <fullName>Hydroxypyruvate dehydrogenase</fullName>
    </alternativeName>
    <alternativeName>
        <fullName>NADH-dependent hydroxypyruvate reductase</fullName>
        <shortName>HPR</shortName>
        <shortName>HPR-A</shortName>
    </alternativeName>
</protein>
<evidence type="ECO:0000250" key="1"/>
<evidence type="ECO:0000305" key="2"/>